<name>RPOC1_THAPS</name>
<gene>
    <name evidence="1" type="primary">rpoC1</name>
</gene>
<geneLocation type="chloroplast"/>
<reference key="1">
    <citation type="journal article" date="2007" name="Mol. Genet. Genomics">
        <title>Chloroplast genomes of the diatoms Phaeodactylum tricornutum and Thalassiosira pseudonana: comparison with other plastid genomes of the red lineage.</title>
        <authorList>
            <person name="Oudot-Le Secq M.-P."/>
            <person name="Grimwood J."/>
            <person name="Shapiro H."/>
            <person name="Armbrust E.V."/>
            <person name="Bowler C."/>
            <person name="Green B.R."/>
        </authorList>
    </citation>
    <scope>NUCLEOTIDE SEQUENCE [LARGE SCALE GENOMIC DNA]</scope>
    <source>
        <strain>CCMP1335 / NEPCC58 / CCAP 1085/12</strain>
    </source>
</reference>
<proteinExistence type="inferred from homology"/>
<sequence length="732" mass="85307">MIRSEKEFDYIKIKLASPMRILQWSHRKLPNGQFVGEVQKSETINYRTFKPEMDGLFCERIFGPSKSLECACGKYKRVRYEGLICERCGVELTESRVRRHRMGHINLIYPVTHVWYTNSRPNYIALLLEVEQCEKRLDTGWTEFADLRDIKEKDNKDIPEYPSSEIECRNYLASPKAILNCKEFLKEKSKAKKSNIVNFYDERIKRIKLASLAYFIAEDEIAFYGLHWDLQQYRRCRELGFTGYPLKPHSKSRNRRRNTPKYLLRSTPNYLIGAVLIKRELEKLNLDQEIIKTRNFIMLCSKVLHKEQPFYNFSHWSRKWEYQRIYKLRDQSIKRIRILENLLTTGANPAWMIITILPVIPPALRPMIQLEGGRFATSDLNELYRRIITRNNRLLRLLEIDAPQLIIRNEKRMLQEAVDTLIDNGKRGKIALSASNRPLKSLSDIIKGKHGRFRQNLLGKRVDYSGRSVIVVGPSLKLNQCGLPYEMAIELFQPFIIRELINQGLASNMKVAKNLLQQNEPIINPVLEKVLANHPIFLNRAPTLHRLGIQAFQPIIVQGRAIKLHPLVCSAFNADFDGDQMAVHVPLSLEAQAECYMLMLAPYNFLSPANGEPIIMPSQDMVLGCYYLTVNNINGLLGSNHYFADLNDVILAYNQDQIEIHTSIWVRYKHKISKPSNFIKKIILNDKSYIEYYENIQIRKDENDQIIVQYLQTTTGRVLLNYIIQTTLNLKP</sequence>
<organism>
    <name type="scientific">Thalassiosira pseudonana</name>
    <name type="common">Marine diatom</name>
    <name type="synonym">Cyclotella nana</name>
    <dbReference type="NCBI Taxonomy" id="35128"/>
    <lineage>
        <taxon>Eukaryota</taxon>
        <taxon>Sar</taxon>
        <taxon>Stramenopiles</taxon>
        <taxon>Ochrophyta</taxon>
        <taxon>Bacillariophyta</taxon>
        <taxon>Coscinodiscophyceae</taxon>
        <taxon>Thalassiosirophycidae</taxon>
        <taxon>Thalassiosirales</taxon>
        <taxon>Thalassiosiraceae</taxon>
        <taxon>Thalassiosira</taxon>
    </lineage>
</organism>
<dbReference type="EC" id="2.7.7.6" evidence="1"/>
<dbReference type="EMBL" id="EF067921">
    <property type="protein sequence ID" value="ABK20745.1"/>
    <property type="molecule type" value="Genomic_DNA"/>
</dbReference>
<dbReference type="RefSeq" id="YP_874522.1">
    <property type="nucleotide sequence ID" value="NC_008589.1"/>
</dbReference>
<dbReference type="SMR" id="A0T0R0"/>
<dbReference type="FunCoup" id="A0T0R0">
    <property type="interactions" value="5"/>
</dbReference>
<dbReference type="STRING" id="35128.A0T0R0"/>
<dbReference type="PaxDb" id="35128-Thapsdraft997"/>
<dbReference type="GeneID" id="4524728"/>
<dbReference type="eggNOG" id="ENOG502RUNJ">
    <property type="taxonomic scope" value="Eukaryota"/>
</dbReference>
<dbReference type="InParanoid" id="A0T0R0"/>
<dbReference type="GO" id="GO:0009507">
    <property type="term" value="C:chloroplast"/>
    <property type="evidence" value="ECO:0007669"/>
    <property type="project" value="UniProtKB-SubCell"/>
</dbReference>
<dbReference type="GO" id="GO:0000428">
    <property type="term" value="C:DNA-directed RNA polymerase complex"/>
    <property type="evidence" value="ECO:0007669"/>
    <property type="project" value="UniProtKB-KW"/>
</dbReference>
<dbReference type="GO" id="GO:0005739">
    <property type="term" value="C:mitochondrion"/>
    <property type="evidence" value="ECO:0007669"/>
    <property type="project" value="GOC"/>
</dbReference>
<dbReference type="GO" id="GO:0003677">
    <property type="term" value="F:DNA binding"/>
    <property type="evidence" value="ECO:0007669"/>
    <property type="project" value="UniProtKB-UniRule"/>
</dbReference>
<dbReference type="GO" id="GO:0003899">
    <property type="term" value="F:DNA-directed RNA polymerase activity"/>
    <property type="evidence" value="ECO:0007669"/>
    <property type="project" value="UniProtKB-UniRule"/>
</dbReference>
<dbReference type="GO" id="GO:0000287">
    <property type="term" value="F:magnesium ion binding"/>
    <property type="evidence" value="ECO:0007669"/>
    <property type="project" value="UniProtKB-UniRule"/>
</dbReference>
<dbReference type="GO" id="GO:0008270">
    <property type="term" value="F:zinc ion binding"/>
    <property type="evidence" value="ECO:0007669"/>
    <property type="project" value="UniProtKB-UniRule"/>
</dbReference>
<dbReference type="GO" id="GO:0006351">
    <property type="term" value="P:DNA-templated transcription"/>
    <property type="evidence" value="ECO:0007669"/>
    <property type="project" value="UniProtKB-UniRule"/>
</dbReference>
<dbReference type="Gene3D" id="1.10.40.90">
    <property type="match status" value="1"/>
</dbReference>
<dbReference type="Gene3D" id="2.40.40.20">
    <property type="match status" value="1"/>
</dbReference>
<dbReference type="Gene3D" id="4.10.860.120">
    <property type="entry name" value="RNA polymerase II, clamp domain"/>
    <property type="match status" value="1"/>
</dbReference>
<dbReference type="Gene3D" id="1.10.274.100">
    <property type="entry name" value="RNA polymerase Rpb1, domain 3"/>
    <property type="match status" value="1"/>
</dbReference>
<dbReference type="HAMAP" id="MF_01323">
    <property type="entry name" value="RNApol_bact_RpoC1"/>
    <property type="match status" value="1"/>
</dbReference>
<dbReference type="InterPro" id="IPR045867">
    <property type="entry name" value="DNA-dir_RpoC_beta_prime"/>
</dbReference>
<dbReference type="InterPro" id="IPR000722">
    <property type="entry name" value="RNA_pol_asu"/>
</dbReference>
<dbReference type="InterPro" id="IPR006592">
    <property type="entry name" value="RNA_pol_N"/>
</dbReference>
<dbReference type="InterPro" id="IPR007080">
    <property type="entry name" value="RNA_pol_Rpb1_1"/>
</dbReference>
<dbReference type="InterPro" id="IPR007066">
    <property type="entry name" value="RNA_pol_Rpb1_3"/>
</dbReference>
<dbReference type="InterPro" id="IPR042102">
    <property type="entry name" value="RNA_pol_Rpb1_3_sf"/>
</dbReference>
<dbReference type="InterPro" id="IPR044893">
    <property type="entry name" value="RNA_pol_Rpb1_clamp_domain"/>
</dbReference>
<dbReference type="InterPro" id="IPR034678">
    <property type="entry name" value="RNApol_RpoC1"/>
</dbReference>
<dbReference type="PANTHER" id="PTHR19376">
    <property type="entry name" value="DNA-DIRECTED RNA POLYMERASE"/>
    <property type="match status" value="1"/>
</dbReference>
<dbReference type="PANTHER" id="PTHR19376:SF54">
    <property type="entry name" value="DNA-DIRECTED RNA POLYMERASE SUBUNIT BETA"/>
    <property type="match status" value="1"/>
</dbReference>
<dbReference type="Pfam" id="PF04997">
    <property type="entry name" value="RNA_pol_Rpb1_1"/>
    <property type="match status" value="1"/>
</dbReference>
<dbReference type="Pfam" id="PF00623">
    <property type="entry name" value="RNA_pol_Rpb1_2"/>
    <property type="match status" value="2"/>
</dbReference>
<dbReference type="Pfam" id="PF04983">
    <property type="entry name" value="RNA_pol_Rpb1_3"/>
    <property type="match status" value="1"/>
</dbReference>
<dbReference type="SMART" id="SM00663">
    <property type="entry name" value="RPOLA_N"/>
    <property type="match status" value="1"/>
</dbReference>
<dbReference type="SUPFAM" id="SSF64484">
    <property type="entry name" value="beta and beta-prime subunits of DNA dependent RNA-polymerase"/>
    <property type="match status" value="1"/>
</dbReference>
<protein>
    <recommendedName>
        <fullName evidence="1">DNA-directed RNA polymerase subunit beta'</fullName>
        <ecNumber evidence="1">2.7.7.6</ecNumber>
    </recommendedName>
    <alternativeName>
        <fullName evidence="1">PEP</fullName>
    </alternativeName>
    <alternativeName>
        <fullName evidence="1">Plastid-encoded RNA polymerase subunit beta'</fullName>
        <shortName evidence="1">RNA polymerase subunit beta'</shortName>
    </alternativeName>
</protein>
<accession>A0T0R0</accession>
<feature type="chain" id="PRO_0000277183" description="DNA-directed RNA polymerase subunit beta'">
    <location>
        <begin position="1"/>
        <end position="732"/>
    </location>
</feature>
<feature type="binding site" evidence="1">
    <location>
        <position position="70"/>
    </location>
    <ligand>
        <name>Zn(2+)</name>
        <dbReference type="ChEBI" id="CHEBI:29105"/>
    </ligand>
</feature>
<feature type="binding site" evidence="1">
    <location>
        <position position="72"/>
    </location>
    <ligand>
        <name>Zn(2+)</name>
        <dbReference type="ChEBI" id="CHEBI:29105"/>
    </ligand>
</feature>
<feature type="binding site" evidence="1">
    <location>
        <position position="85"/>
    </location>
    <ligand>
        <name>Zn(2+)</name>
        <dbReference type="ChEBI" id="CHEBI:29105"/>
    </ligand>
</feature>
<feature type="binding site" evidence="1">
    <location>
        <position position="88"/>
    </location>
    <ligand>
        <name>Zn(2+)</name>
        <dbReference type="ChEBI" id="CHEBI:29105"/>
    </ligand>
</feature>
<feature type="binding site" evidence="1">
    <location>
        <position position="575"/>
    </location>
    <ligand>
        <name>Mg(2+)</name>
        <dbReference type="ChEBI" id="CHEBI:18420"/>
    </ligand>
</feature>
<feature type="binding site" evidence="1">
    <location>
        <position position="577"/>
    </location>
    <ligand>
        <name>Mg(2+)</name>
        <dbReference type="ChEBI" id="CHEBI:18420"/>
    </ligand>
</feature>
<feature type="binding site" evidence="1">
    <location>
        <position position="579"/>
    </location>
    <ligand>
        <name>Mg(2+)</name>
        <dbReference type="ChEBI" id="CHEBI:18420"/>
    </ligand>
</feature>
<evidence type="ECO:0000255" key="1">
    <source>
        <dbReference type="HAMAP-Rule" id="MF_01323"/>
    </source>
</evidence>
<keyword id="KW-0150">Chloroplast</keyword>
<keyword id="KW-0240">DNA-directed RNA polymerase</keyword>
<keyword id="KW-0460">Magnesium</keyword>
<keyword id="KW-0479">Metal-binding</keyword>
<keyword id="KW-0548">Nucleotidyltransferase</keyword>
<keyword id="KW-0934">Plastid</keyword>
<keyword id="KW-0804">Transcription</keyword>
<keyword id="KW-0808">Transferase</keyword>
<keyword id="KW-0862">Zinc</keyword>
<comment type="function">
    <text evidence="1">DNA-dependent RNA polymerase catalyzes the transcription of DNA into RNA using the four ribonucleoside triphosphates as substrates.</text>
</comment>
<comment type="catalytic activity">
    <reaction evidence="1">
        <text>RNA(n) + a ribonucleoside 5'-triphosphate = RNA(n+1) + diphosphate</text>
        <dbReference type="Rhea" id="RHEA:21248"/>
        <dbReference type="Rhea" id="RHEA-COMP:14527"/>
        <dbReference type="Rhea" id="RHEA-COMP:17342"/>
        <dbReference type="ChEBI" id="CHEBI:33019"/>
        <dbReference type="ChEBI" id="CHEBI:61557"/>
        <dbReference type="ChEBI" id="CHEBI:140395"/>
        <dbReference type="EC" id="2.7.7.6"/>
    </reaction>
</comment>
<comment type="cofactor">
    <cofactor evidence="1">
        <name>Mg(2+)</name>
        <dbReference type="ChEBI" id="CHEBI:18420"/>
    </cofactor>
    <text evidence="1">Binds 1 Mg(2+) ion per subunit.</text>
</comment>
<comment type="cofactor">
    <cofactor evidence="1">
        <name>Zn(2+)</name>
        <dbReference type="ChEBI" id="CHEBI:29105"/>
    </cofactor>
    <text evidence="1">Binds 1 Zn(2+) ion per subunit.</text>
</comment>
<comment type="subunit">
    <text evidence="1">In plastids the minimal PEP RNA polymerase catalytic core is composed of four subunits: alpha, beta, beta', and beta''. When a (nuclear-encoded) sigma factor is associated with the core the holoenzyme is formed, which can initiate transcription.</text>
</comment>
<comment type="subcellular location">
    <subcellularLocation>
        <location evidence="1">Plastid</location>
        <location evidence="1">Chloroplast</location>
    </subcellularLocation>
</comment>
<comment type="similarity">
    <text evidence="1">Belongs to the RNA polymerase beta' chain family. RpoC1 subfamily.</text>
</comment>